<evidence type="ECO:0000256" key="1">
    <source>
        <dbReference type="SAM" id="MobiDB-lite"/>
    </source>
</evidence>
<evidence type="ECO:0000269" key="2">
    <source>
    </source>
</evidence>
<evidence type="ECO:0000269" key="3">
    <source>
    </source>
</evidence>
<comment type="function">
    <text evidence="2">Has a role in meiosis.</text>
</comment>
<comment type="subcellular location">
    <subcellularLocation>
        <location evidence="3">Cytoplasm</location>
    </subcellularLocation>
    <subcellularLocation>
        <location evidence="3">Nucleus</location>
    </subcellularLocation>
</comment>
<reference key="1">
    <citation type="journal article" date="2002" name="Nature">
        <title>The genome sequence of Schizosaccharomyces pombe.</title>
        <authorList>
            <person name="Wood V."/>
            <person name="Gwilliam R."/>
            <person name="Rajandream M.A."/>
            <person name="Lyne M.H."/>
            <person name="Lyne R."/>
            <person name="Stewart A."/>
            <person name="Sgouros J.G."/>
            <person name="Peat N."/>
            <person name="Hayles J."/>
            <person name="Baker S.G."/>
            <person name="Basham D."/>
            <person name="Bowman S."/>
            <person name="Brooks K."/>
            <person name="Brown D."/>
            <person name="Brown S."/>
            <person name="Chillingworth T."/>
            <person name="Churcher C.M."/>
            <person name="Collins M."/>
            <person name="Connor R."/>
            <person name="Cronin A."/>
            <person name="Davis P."/>
            <person name="Feltwell T."/>
            <person name="Fraser A."/>
            <person name="Gentles S."/>
            <person name="Goble A."/>
            <person name="Hamlin N."/>
            <person name="Harris D.E."/>
            <person name="Hidalgo J."/>
            <person name="Hodgson G."/>
            <person name="Holroyd S."/>
            <person name="Hornsby T."/>
            <person name="Howarth S."/>
            <person name="Huckle E.J."/>
            <person name="Hunt S."/>
            <person name="Jagels K."/>
            <person name="James K.D."/>
            <person name="Jones L."/>
            <person name="Jones M."/>
            <person name="Leather S."/>
            <person name="McDonald S."/>
            <person name="McLean J."/>
            <person name="Mooney P."/>
            <person name="Moule S."/>
            <person name="Mungall K.L."/>
            <person name="Murphy L.D."/>
            <person name="Niblett D."/>
            <person name="Odell C."/>
            <person name="Oliver K."/>
            <person name="O'Neil S."/>
            <person name="Pearson D."/>
            <person name="Quail M.A."/>
            <person name="Rabbinowitsch E."/>
            <person name="Rutherford K.M."/>
            <person name="Rutter S."/>
            <person name="Saunders D."/>
            <person name="Seeger K."/>
            <person name="Sharp S."/>
            <person name="Skelton J."/>
            <person name="Simmonds M.N."/>
            <person name="Squares R."/>
            <person name="Squares S."/>
            <person name="Stevens K."/>
            <person name="Taylor K."/>
            <person name="Taylor R.G."/>
            <person name="Tivey A."/>
            <person name="Walsh S.V."/>
            <person name="Warren T."/>
            <person name="Whitehead S."/>
            <person name="Woodward J.R."/>
            <person name="Volckaert G."/>
            <person name="Aert R."/>
            <person name="Robben J."/>
            <person name="Grymonprez B."/>
            <person name="Weltjens I."/>
            <person name="Vanstreels E."/>
            <person name="Rieger M."/>
            <person name="Schaefer M."/>
            <person name="Mueller-Auer S."/>
            <person name="Gabel C."/>
            <person name="Fuchs M."/>
            <person name="Duesterhoeft A."/>
            <person name="Fritzc C."/>
            <person name="Holzer E."/>
            <person name="Moestl D."/>
            <person name="Hilbert H."/>
            <person name="Borzym K."/>
            <person name="Langer I."/>
            <person name="Beck A."/>
            <person name="Lehrach H."/>
            <person name="Reinhardt R."/>
            <person name="Pohl T.M."/>
            <person name="Eger P."/>
            <person name="Zimmermann W."/>
            <person name="Wedler H."/>
            <person name="Wambutt R."/>
            <person name="Purnelle B."/>
            <person name="Goffeau A."/>
            <person name="Cadieu E."/>
            <person name="Dreano S."/>
            <person name="Gloux S."/>
            <person name="Lelaure V."/>
            <person name="Mottier S."/>
            <person name="Galibert F."/>
            <person name="Aves S.J."/>
            <person name="Xiang Z."/>
            <person name="Hunt C."/>
            <person name="Moore K."/>
            <person name="Hurst S.M."/>
            <person name="Lucas M."/>
            <person name="Rochet M."/>
            <person name="Gaillardin C."/>
            <person name="Tallada V.A."/>
            <person name="Garzon A."/>
            <person name="Thode G."/>
            <person name="Daga R.R."/>
            <person name="Cruzado L."/>
            <person name="Jimenez J."/>
            <person name="Sanchez M."/>
            <person name="del Rey F."/>
            <person name="Benito J."/>
            <person name="Dominguez A."/>
            <person name="Revuelta J.L."/>
            <person name="Moreno S."/>
            <person name="Armstrong J."/>
            <person name="Forsburg S.L."/>
            <person name="Cerutti L."/>
            <person name="Lowe T."/>
            <person name="McCombie W.R."/>
            <person name="Paulsen I."/>
            <person name="Potashkin J."/>
            <person name="Shpakovski G.V."/>
            <person name="Ussery D."/>
            <person name="Barrell B.G."/>
            <person name="Nurse P."/>
        </authorList>
    </citation>
    <scope>NUCLEOTIDE SEQUENCE [LARGE SCALE GENOMIC DNA]</scope>
    <source>
        <strain>972 / ATCC 24843</strain>
    </source>
</reference>
<reference key="2">
    <citation type="journal article" date="2005" name="Curr. Biol.">
        <title>A large-scale screen in S. pombe identifies seven novel genes required for critical meiotic events.</title>
        <authorList>
            <person name="Martin-Castellanos C."/>
            <person name="Blanco M."/>
            <person name="Rozalen A.E."/>
            <person name="Perez-Hidalgo L."/>
            <person name="Garcia A.I."/>
            <person name="Conde F."/>
            <person name="Mata J."/>
            <person name="Ellermeier C."/>
            <person name="Davis L."/>
            <person name="San-Segundo P."/>
            <person name="Smith G.R."/>
            <person name="Moreno S."/>
        </authorList>
    </citation>
    <scope>FUNCTION IN MEIOSIS</scope>
</reference>
<reference key="3">
    <citation type="journal article" date="2006" name="Nat. Biotechnol.">
        <title>ORFeome cloning and global analysis of protein localization in the fission yeast Schizosaccharomyces pombe.</title>
        <authorList>
            <person name="Matsuyama A."/>
            <person name="Arai R."/>
            <person name="Yashiroda Y."/>
            <person name="Shirai A."/>
            <person name="Kamata A."/>
            <person name="Sekido S."/>
            <person name="Kobayashi Y."/>
            <person name="Hashimoto A."/>
            <person name="Hamamoto M."/>
            <person name="Hiraoka Y."/>
            <person name="Horinouchi S."/>
            <person name="Yoshida M."/>
        </authorList>
    </citation>
    <scope>SUBCELLULAR LOCATION [LARGE SCALE ANALYSIS]</scope>
</reference>
<proteinExistence type="evidence at protein level"/>
<sequence length="411" mass="46218">MLAQNSREVLDKDLESHIPGAYSPAPPSSSLPTQNESNLQQSEKPLKHFENKKFKGEDVFAHSISKPFDGQNDEEKPSLYSHLTNELYETHDSSDYFGTYMEREESGHDEEEADKDASFTGYYNSRNNDEEGSELADSQMLPMTESFADIEDIHHHQHEDEFSSSNKDKGFTYEKPVTELPPKRPPYHYESSSTSISFVNGGPNFRKVKSGLLKPDADAASNLSTTSLVNQEYVMKQVTPNEYSMEYLRESFPQTPMGTEASGYSFDRTPHKSDIQASDRLNALNEKLLQGIQQSHQPYHYTNVKDSQGSHQTKVTIEENMEAPSHQAANRTTLTDSPLGIVEDETTILTDLEPSGPGLQKRASETSMSTNVSLPYYQNGRRVRNILTPYPTVSLASTMTSETEDVSEERI</sequence>
<protein>
    <recommendedName>
        <fullName>Meiotically up-regulated gene 147 protein</fullName>
    </recommendedName>
</protein>
<name>MU147_SCHPO</name>
<dbReference type="EMBL" id="CU329671">
    <property type="protein sequence ID" value="CAA18885.1"/>
    <property type="molecule type" value="Genomic_DNA"/>
</dbReference>
<dbReference type="PIR" id="T40538">
    <property type="entry name" value="T40538"/>
</dbReference>
<dbReference type="RefSeq" id="NP_596711.1">
    <property type="nucleotide sequence ID" value="NM_001022636.2"/>
</dbReference>
<dbReference type="BioGRID" id="277188">
    <property type="interactions" value="23"/>
</dbReference>
<dbReference type="STRING" id="284812.O60057"/>
<dbReference type="iPTMnet" id="O60057"/>
<dbReference type="PaxDb" id="4896-SPBC56F2.06.1"/>
<dbReference type="EnsemblFungi" id="SPBC56F2.06.1">
    <property type="protein sequence ID" value="SPBC56F2.06.1:pep"/>
    <property type="gene ID" value="SPBC56F2.06"/>
</dbReference>
<dbReference type="GeneID" id="2540663"/>
<dbReference type="KEGG" id="spo:2540663"/>
<dbReference type="PomBase" id="SPBC56F2.06">
    <property type="gene designation" value="mug147"/>
</dbReference>
<dbReference type="VEuPathDB" id="FungiDB:SPBC56F2.06"/>
<dbReference type="HOGENOM" id="CLU_669320_0_0_1"/>
<dbReference type="InParanoid" id="O60057"/>
<dbReference type="OMA" id="YEMGDSQ"/>
<dbReference type="PRO" id="PR:O60057"/>
<dbReference type="Proteomes" id="UP000002485">
    <property type="component" value="Chromosome II"/>
</dbReference>
<dbReference type="GO" id="GO:0005829">
    <property type="term" value="C:cytosol"/>
    <property type="evidence" value="ECO:0007005"/>
    <property type="project" value="PomBase"/>
</dbReference>
<dbReference type="GO" id="GO:0005634">
    <property type="term" value="C:nucleus"/>
    <property type="evidence" value="ECO:0007005"/>
    <property type="project" value="PomBase"/>
</dbReference>
<dbReference type="GO" id="GO:0051321">
    <property type="term" value="P:meiotic cell cycle"/>
    <property type="evidence" value="ECO:0007669"/>
    <property type="project" value="UniProtKB-KW"/>
</dbReference>
<organism>
    <name type="scientific">Schizosaccharomyces pombe (strain 972 / ATCC 24843)</name>
    <name type="common">Fission yeast</name>
    <dbReference type="NCBI Taxonomy" id="284812"/>
    <lineage>
        <taxon>Eukaryota</taxon>
        <taxon>Fungi</taxon>
        <taxon>Dikarya</taxon>
        <taxon>Ascomycota</taxon>
        <taxon>Taphrinomycotina</taxon>
        <taxon>Schizosaccharomycetes</taxon>
        <taxon>Schizosaccharomycetales</taxon>
        <taxon>Schizosaccharomycetaceae</taxon>
        <taxon>Schizosaccharomyces</taxon>
    </lineage>
</organism>
<keyword id="KW-0963">Cytoplasm</keyword>
<keyword id="KW-0469">Meiosis</keyword>
<keyword id="KW-0539">Nucleus</keyword>
<keyword id="KW-1185">Reference proteome</keyword>
<accession>O60057</accession>
<feature type="chain" id="PRO_0000278507" description="Meiotically up-regulated gene 147 protein">
    <location>
        <begin position="1"/>
        <end position="411"/>
    </location>
</feature>
<feature type="region of interest" description="Disordered" evidence="1">
    <location>
        <begin position="1"/>
        <end position="52"/>
    </location>
</feature>
<feature type="region of interest" description="Disordered" evidence="1">
    <location>
        <begin position="102"/>
        <end position="137"/>
    </location>
</feature>
<feature type="region of interest" description="Disordered" evidence="1">
    <location>
        <begin position="156"/>
        <end position="191"/>
    </location>
</feature>
<feature type="compositionally biased region" description="Polar residues" evidence="1">
    <location>
        <begin position="33"/>
        <end position="43"/>
    </location>
</feature>
<feature type="compositionally biased region" description="Basic and acidic residues" evidence="1">
    <location>
        <begin position="156"/>
        <end position="172"/>
    </location>
</feature>
<gene>
    <name type="primary">mug147</name>
    <name type="ORF">SPBC56F2.06</name>
</gene>